<sequence length="505" mass="59276">MAQIDFRKKINWHRRYRSPQGVKTEHEILRIFESDRGRIINSPAIRRLQQKTQVFPLERNAAVRTRLTHSMEVQQVGRYIAKEILSRLKELKLLEAYGLDELTGPFESIVEMSCLMHDIGNPPFGHLGEAAINDWFRQRLHPEDAESQPLTDDRCSVAGLRLRDGEEPLNELRRKIRQDLCHFEGNAQGIRLVHTLMRMNLTWAQVGGILKYTRPAWWRGETPETHHYLMKKPGYYLSEEAYIARLRKELNLALYSRFPLTWIMEAADDISYCVADLEDAVEKRIFTVEQLYHHLHEAWGQHEKGSLFSLVVENAWEKSRSNSLSRSTEDQFFMYLRVNTLNKLVPYAAQRFIDNLPAIFAGTFNHALLEDASECSDLLKLYKNVAVKHVFSHPDVERLELQGYRVISGLLEIYRPLLSLSLSDFTELVEKERVKRFPIESRLFHKLSTPHRLAYVEAVSKLPSDSPEFPLWEYYYRCRLLQDYISGMTDLYAWDEYRRLMAVEQ</sequence>
<feature type="initiator methionine" description="Removed" evidence="1">
    <location>
        <position position="1"/>
    </location>
</feature>
<feature type="chain" id="PRO_0000205282" description="Deoxyguanosinetriphosphate triphosphohydrolase">
    <location>
        <begin position="2"/>
        <end position="505"/>
    </location>
</feature>
<feature type="domain" description="HD" evidence="3">
    <location>
        <begin position="66"/>
        <end position="273"/>
    </location>
</feature>
<keyword id="KW-0378">Hydrolase</keyword>
<keyword id="KW-0460">Magnesium</keyword>
<organism>
    <name type="scientific">Escherichia fergusonii (strain ATCC 35469 / DSM 13698 / CCUG 18766 / IAM 14443 / JCM 21226 / LMG 7866 / NBRC 102419 / NCTC 12128 / CDC 0568-73)</name>
    <dbReference type="NCBI Taxonomy" id="585054"/>
    <lineage>
        <taxon>Bacteria</taxon>
        <taxon>Pseudomonadati</taxon>
        <taxon>Pseudomonadota</taxon>
        <taxon>Gammaproteobacteria</taxon>
        <taxon>Enterobacterales</taxon>
        <taxon>Enterobacteriaceae</taxon>
        <taxon>Escherichia</taxon>
    </lineage>
</organism>
<proteinExistence type="inferred from homology"/>
<name>DGTP2_ESCF3</name>
<protein>
    <recommendedName>
        <fullName evidence="2">Deoxyguanosinetriphosphate triphosphohydrolase</fullName>
        <shortName evidence="2">dGTP triphosphohydrolase</shortName>
        <shortName evidence="2">dGTPase</shortName>
        <ecNumber evidence="2">3.1.5.1</ecNumber>
    </recommendedName>
</protein>
<reference key="1">
    <citation type="journal article" date="1997" name="J. Biol. Chem.">
        <title>Cloning, purification, and characterization of the Shigella boydii dGTP triphosphohydrolase.</title>
        <authorList>
            <person name="Quirk S."/>
            <person name="Do B.T."/>
        </authorList>
    </citation>
    <scope>NUCLEOTIDE SEQUENCE [GENOMIC DNA]</scope>
</reference>
<evidence type="ECO:0000250" key="1"/>
<evidence type="ECO:0000255" key="2">
    <source>
        <dbReference type="HAMAP-Rule" id="MF_00030"/>
    </source>
</evidence>
<evidence type="ECO:0000255" key="3">
    <source>
        <dbReference type="PROSITE-ProRule" id="PRU01175"/>
    </source>
</evidence>
<evidence type="ECO:0000305" key="4"/>
<gene>
    <name evidence="2" type="primary">dgt</name>
</gene>
<comment type="function">
    <text evidence="2">dGTPase preferentially hydrolyzes dGTP over the other canonical NTPs.</text>
</comment>
<comment type="catalytic activity">
    <reaction evidence="2">
        <text>dGTP + H2O = 2'-deoxyguanosine + triphosphate + H(+)</text>
        <dbReference type="Rhea" id="RHEA:15193"/>
        <dbReference type="ChEBI" id="CHEBI:15377"/>
        <dbReference type="ChEBI" id="CHEBI:15378"/>
        <dbReference type="ChEBI" id="CHEBI:17172"/>
        <dbReference type="ChEBI" id="CHEBI:18036"/>
        <dbReference type="ChEBI" id="CHEBI:61429"/>
        <dbReference type="EC" id="3.1.5.1"/>
    </reaction>
</comment>
<comment type="cofactor">
    <cofactor evidence="2">
        <name>Mg(2+)</name>
        <dbReference type="ChEBI" id="CHEBI:18420"/>
    </cofactor>
</comment>
<comment type="subunit">
    <text evidence="2">Homotetramer.</text>
</comment>
<comment type="similarity">
    <text evidence="2">Belongs to the dGTPase family. Type 1 subfamily.</text>
</comment>
<comment type="caution">
    <text evidence="4">Sequence highly divergent from genome sequence. It could originate from another bacterial species.</text>
</comment>
<dbReference type="EC" id="3.1.5.1" evidence="2"/>
<dbReference type="EMBL" id="U42435">
    <property type="protein sequence ID" value="AAA85187.1"/>
    <property type="molecule type" value="Genomic_DNA"/>
</dbReference>
<dbReference type="SMR" id="Q59435"/>
<dbReference type="GO" id="GO:0008832">
    <property type="term" value="F:dGTPase activity"/>
    <property type="evidence" value="ECO:0007669"/>
    <property type="project" value="UniProtKB-UniRule"/>
</dbReference>
<dbReference type="GO" id="GO:0000287">
    <property type="term" value="F:magnesium ion binding"/>
    <property type="evidence" value="ECO:0007669"/>
    <property type="project" value="UniProtKB-UniRule"/>
</dbReference>
<dbReference type="GO" id="GO:0006203">
    <property type="term" value="P:dGTP catabolic process"/>
    <property type="evidence" value="ECO:0007669"/>
    <property type="project" value="InterPro"/>
</dbReference>
<dbReference type="CDD" id="cd00077">
    <property type="entry name" value="HDc"/>
    <property type="match status" value="1"/>
</dbReference>
<dbReference type="FunFam" id="1.10.3210.10:FF:000009">
    <property type="entry name" value="Deoxyguanosinetriphosphate triphosphohydrolase"/>
    <property type="match status" value="1"/>
</dbReference>
<dbReference type="FunFam" id="1.10.3210.10:FF:000010">
    <property type="entry name" value="Deoxyguanosinetriphosphate triphosphohydrolase"/>
    <property type="match status" value="1"/>
</dbReference>
<dbReference type="FunFam" id="1.10.3410.10:FF:000001">
    <property type="entry name" value="Deoxyguanosinetriphosphate triphosphohydrolase"/>
    <property type="match status" value="1"/>
</dbReference>
<dbReference type="Gene3D" id="1.10.3210.10">
    <property type="entry name" value="Hypothetical protein af1432"/>
    <property type="match status" value="2"/>
</dbReference>
<dbReference type="Gene3D" id="1.10.3410.10">
    <property type="entry name" value="putative deoxyguanosinetriphosphate triphosphohydrolase like domain"/>
    <property type="match status" value="1"/>
</dbReference>
<dbReference type="HAMAP" id="MF_00030">
    <property type="entry name" value="dGTPase_type1"/>
    <property type="match status" value="1"/>
</dbReference>
<dbReference type="InterPro" id="IPR023293">
    <property type="entry name" value="dGTP_triP_hydro_central_sf"/>
</dbReference>
<dbReference type="InterPro" id="IPR006261">
    <property type="entry name" value="dGTPase"/>
</dbReference>
<dbReference type="InterPro" id="IPR050135">
    <property type="entry name" value="dGTPase-like"/>
</dbReference>
<dbReference type="InterPro" id="IPR020779">
    <property type="entry name" value="dNTPase_1"/>
</dbReference>
<dbReference type="InterPro" id="IPR003607">
    <property type="entry name" value="HD/PDEase_dom"/>
</dbReference>
<dbReference type="InterPro" id="IPR006674">
    <property type="entry name" value="HD_domain"/>
</dbReference>
<dbReference type="NCBIfam" id="TIGR01353">
    <property type="entry name" value="dGTP_triPase"/>
    <property type="match status" value="1"/>
</dbReference>
<dbReference type="NCBIfam" id="NF003429">
    <property type="entry name" value="PRK04926.1"/>
    <property type="match status" value="1"/>
</dbReference>
<dbReference type="PANTHER" id="PTHR11373:SF32">
    <property type="entry name" value="DEOXYGUANOSINETRIPHOSPHATE TRIPHOSPHOHYDROLASE"/>
    <property type="match status" value="1"/>
</dbReference>
<dbReference type="PANTHER" id="PTHR11373">
    <property type="entry name" value="DEOXYNUCLEOSIDE TRIPHOSPHATE TRIPHOSPHOHYDROLASE"/>
    <property type="match status" value="1"/>
</dbReference>
<dbReference type="Pfam" id="PF01966">
    <property type="entry name" value="HD"/>
    <property type="match status" value="1"/>
</dbReference>
<dbReference type="SMART" id="SM00471">
    <property type="entry name" value="HDc"/>
    <property type="match status" value="1"/>
</dbReference>
<dbReference type="SUPFAM" id="SSF109604">
    <property type="entry name" value="HD-domain/PDEase-like"/>
    <property type="match status" value="1"/>
</dbReference>
<dbReference type="PROSITE" id="PS51831">
    <property type="entry name" value="HD"/>
    <property type="match status" value="1"/>
</dbReference>
<accession>Q59435</accession>